<name>RUVC_ANAMF</name>
<accession>B9KH95</accession>
<organism>
    <name type="scientific">Anaplasma marginale (strain Florida)</name>
    <dbReference type="NCBI Taxonomy" id="320483"/>
    <lineage>
        <taxon>Bacteria</taxon>
        <taxon>Pseudomonadati</taxon>
        <taxon>Pseudomonadota</taxon>
        <taxon>Alphaproteobacteria</taxon>
        <taxon>Rickettsiales</taxon>
        <taxon>Anaplasmataceae</taxon>
        <taxon>Anaplasma</taxon>
    </lineage>
</organism>
<sequence>MMIIGIDPGLEFTGWGVVSSTNSQSVCLLDSGVISTRGISRESEKLYKIYVSLLSVLSLYKIDEASIEKVFINSNPRSSMSLCYARAASTISVMSRGIDIYEYSSTAIKKCITGSGMAPKEQVSFMVRSSLGIKQDVEINNHSSDAIAAALCHVYNTRNRNFALK</sequence>
<proteinExistence type="inferred from homology"/>
<feature type="chain" id="PRO_1000195233" description="Crossover junction endodeoxyribonuclease RuvC">
    <location>
        <begin position="1"/>
        <end position="165"/>
    </location>
</feature>
<feature type="active site" evidence="1">
    <location>
        <position position="7"/>
    </location>
</feature>
<feature type="active site" evidence="1">
    <location>
        <position position="68"/>
    </location>
</feature>
<feature type="active site" evidence="1">
    <location>
        <position position="142"/>
    </location>
</feature>
<feature type="binding site" evidence="1">
    <location>
        <position position="7"/>
    </location>
    <ligand>
        <name>Mg(2+)</name>
        <dbReference type="ChEBI" id="CHEBI:18420"/>
        <label>1</label>
    </ligand>
</feature>
<feature type="binding site" evidence="1">
    <location>
        <position position="68"/>
    </location>
    <ligand>
        <name>Mg(2+)</name>
        <dbReference type="ChEBI" id="CHEBI:18420"/>
        <label>2</label>
    </ligand>
</feature>
<feature type="binding site" evidence="1">
    <location>
        <position position="142"/>
    </location>
    <ligand>
        <name>Mg(2+)</name>
        <dbReference type="ChEBI" id="CHEBI:18420"/>
        <label>1</label>
    </ligand>
</feature>
<gene>
    <name evidence="1" type="primary">ruvC</name>
    <name type="ordered locus">AMF_981</name>
</gene>
<comment type="function">
    <text evidence="1">The RuvA-RuvB-RuvC complex processes Holliday junction (HJ) DNA during genetic recombination and DNA repair. Endonuclease that resolves HJ intermediates. Cleaves cruciform DNA by making single-stranded nicks across the HJ at symmetrical positions within the homologous arms, yielding a 5'-phosphate and a 3'-hydroxyl group; requires a central core of homology in the junction. The consensus cleavage sequence is 5'-(A/T)TT(C/G)-3'. Cleavage occurs on the 3'-side of the TT dinucleotide at the point of strand exchange. HJ branch migration catalyzed by RuvA-RuvB allows RuvC to scan DNA until it finds its consensus sequence, where it cleaves and resolves the cruciform DNA.</text>
</comment>
<comment type="catalytic activity">
    <reaction evidence="1">
        <text>Endonucleolytic cleavage at a junction such as a reciprocal single-stranded crossover between two homologous DNA duplexes (Holliday junction).</text>
        <dbReference type="EC" id="3.1.21.10"/>
    </reaction>
</comment>
<comment type="cofactor">
    <cofactor evidence="1">
        <name>Mg(2+)</name>
        <dbReference type="ChEBI" id="CHEBI:18420"/>
    </cofactor>
    <text evidence="1">Binds 2 Mg(2+) ion per subunit.</text>
</comment>
<comment type="subunit">
    <text evidence="1">Homodimer which binds Holliday junction (HJ) DNA. The HJ becomes 2-fold symmetrical on binding to RuvC with unstacked arms; it has a different conformation from HJ DNA in complex with RuvA. In the full resolvosome a probable DNA-RuvA(4)-RuvB(12)-RuvC(2) complex forms which resolves the HJ.</text>
</comment>
<comment type="subcellular location">
    <subcellularLocation>
        <location evidence="1">Cytoplasm</location>
    </subcellularLocation>
</comment>
<comment type="similarity">
    <text evidence="1">Belongs to the RuvC family.</text>
</comment>
<protein>
    <recommendedName>
        <fullName evidence="1">Crossover junction endodeoxyribonuclease RuvC</fullName>
        <ecNumber evidence="1">3.1.21.10</ecNumber>
    </recommendedName>
    <alternativeName>
        <fullName evidence="1">Holliday junction nuclease RuvC</fullName>
    </alternativeName>
    <alternativeName>
        <fullName evidence="1">Holliday junction resolvase RuvC</fullName>
    </alternativeName>
</protein>
<dbReference type="EC" id="3.1.21.10" evidence="1"/>
<dbReference type="EMBL" id="CP001079">
    <property type="protein sequence ID" value="ACM49799.1"/>
    <property type="molecule type" value="Genomic_DNA"/>
</dbReference>
<dbReference type="SMR" id="B9KH95"/>
<dbReference type="STRING" id="320483.AMF_981"/>
<dbReference type="KEGG" id="amf:AMF_981"/>
<dbReference type="eggNOG" id="COG0817">
    <property type="taxonomic scope" value="Bacteria"/>
</dbReference>
<dbReference type="HOGENOM" id="CLU_091257_1_0_5"/>
<dbReference type="Proteomes" id="UP000007307">
    <property type="component" value="Chromosome"/>
</dbReference>
<dbReference type="GO" id="GO:0005737">
    <property type="term" value="C:cytoplasm"/>
    <property type="evidence" value="ECO:0007669"/>
    <property type="project" value="UniProtKB-SubCell"/>
</dbReference>
<dbReference type="GO" id="GO:0048476">
    <property type="term" value="C:Holliday junction resolvase complex"/>
    <property type="evidence" value="ECO:0007669"/>
    <property type="project" value="UniProtKB-UniRule"/>
</dbReference>
<dbReference type="GO" id="GO:0008821">
    <property type="term" value="F:crossover junction DNA endonuclease activity"/>
    <property type="evidence" value="ECO:0007669"/>
    <property type="project" value="UniProtKB-UniRule"/>
</dbReference>
<dbReference type="GO" id="GO:0003677">
    <property type="term" value="F:DNA binding"/>
    <property type="evidence" value="ECO:0007669"/>
    <property type="project" value="UniProtKB-KW"/>
</dbReference>
<dbReference type="GO" id="GO:0000287">
    <property type="term" value="F:magnesium ion binding"/>
    <property type="evidence" value="ECO:0007669"/>
    <property type="project" value="UniProtKB-UniRule"/>
</dbReference>
<dbReference type="GO" id="GO:0006310">
    <property type="term" value="P:DNA recombination"/>
    <property type="evidence" value="ECO:0007669"/>
    <property type="project" value="UniProtKB-UniRule"/>
</dbReference>
<dbReference type="GO" id="GO:0006281">
    <property type="term" value="P:DNA repair"/>
    <property type="evidence" value="ECO:0007669"/>
    <property type="project" value="UniProtKB-UniRule"/>
</dbReference>
<dbReference type="CDD" id="cd16962">
    <property type="entry name" value="RuvC"/>
    <property type="match status" value="1"/>
</dbReference>
<dbReference type="FunFam" id="3.30.420.10:FF:000002">
    <property type="entry name" value="Crossover junction endodeoxyribonuclease RuvC"/>
    <property type="match status" value="1"/>
</dbReference>
<dbReference type="Gene3D" id="3.30.420.10">
    <property type="entry name" value="Ribonuclease H-like superfamily/Ribonuclease H"/>
    <property type="match status" value="1"/>
</dbReference>
<dbReference type="HAMAP" id="MF_00034">
    <property type="entry name" value="RuvC"/>
    <property type="match status" value="1"/>
</dbReference>
<dbReference type="InterPro" id="IPR012337">
    <property type="entry name" value="RNaseH-like_sf"/>
</dbReference>
<dbReference type="InterPro" id="IPR036397">
    <property type="entry name" value="RNaseH_sf"/>
</dbReference>
<dbReference type="InterPro" id="IPR002176">
    <property type="entry name" value="X-over_junc_endoDNase_RuvC"/>
</dbReference>
<dbReference type="NCBIfam" id="TIGR00228">
    <property type="entry name" value="ruvC"/>
    <property type="match status" value="1"/>
</dbReference>
<dbReference type="PANTHER" id="PTHR30194">
    <property type="entry name" value="CROSSOVER JUNCTION ENDODEOXYRIBONUCLEASE RUVC"/>
    <property type="match status" value="1"/>
</dbReference>
<dbReference type="PANTHER" id="PTHR30194:SF3">
    <property type="entry name" value="CROSSOVER JUNCTION ENDODEOXYRIBONUCLEASE RUVC"/>
    <property type="match status" value="1"/>
</dbReference>
<dbReference type="Pfam" id="PF02075">
    <property type="entry name" value="RuvC"/>
    <property type="match status" value="1"/>
</dbReference>
<dbReference type="PRINTS" id="PR00696">
    <property type="entry name" value="RSOLVASERUVC"/>
</dbReference>
<dbReference type="SUPFAM" id="SSF53098">
    <property type="entry name" value="Ribonuclease H-like"/>
    <property type="match status" value="1"/>
</dbReference>
<evidence type="ECO:0000255" key="1">
    <source>
        <dbReference type="HAMAP-Rule" id="MF_00034"/>
    </source>
</evidence>
<keyword id="KW-0963">Cytoplasm</keyword>
<keyword id="KW-0227">DNA damage</keyword>
<keyword id="KW-0233">DNA recombination</keyword>
<keyword id="KW-0234">DNA repair</keyword>
<keyword id="KW-0238">DNA-binding</keyword>
<keyword id="KW-0255">Endonuclease</keyword>
<keyword id="KW-0378">Hydrolase</keyword>
<keyword id="KW-0460">Magnesium</keyword>
<keyword id="KW-0479">Metal-binding</keyword>
<keyword id="KW-0540">Nuclease</keyword>
<keyword id="KW-1185">Reference proteome</keyword>
<reference key="1">
    <citation type="journal article" date="2009" name="BMC Genomics">
        <title>Conservation in the face of diversity: multistrain analysis of an intracellular bacterium.</title>
        <authorList>
            <person name="Dark M.J."/>
            <person name="Herndon D.R."/>
            <person name="Kappmeyer L.S."/>
            <person name="Gonzales M.P."/>
            <person name="Nordeen E."/>
            <person name="Palmer G.H."/>
            <person name="Knowles D.P. Jr."/>
            <person name="Brayton K.A."/>
        </authorList>
    </citation>
    <scope>NUCLEOTIDE SEQUENCE [LARGE SCALE GENOMIC DNA]</scope>
    <source>
        <strain>Florida</strain>
    </source>
</reference>